<proteinExistence type="inferred from homology"/>
<dbReference type="EC" id="5.4.3.8" evidence="1"/>
<dbReference type="EMBL" id="AP008229">
    <property type="protein sequence ID" value="BAE67883.1"/>
    <property type="molecule type" value="Genomic_DNA"/>
</dbReference>
<dbReference type="RefSeq" id="WP_011407853.1">
    <property type="nucleotide sequence ID" value="NC_007705.1"/>
</dbReference>
<dbReference type="SMR" id="Q2P6E4"/>
<dbReference type="KEGG" id="xom:XOO1128"/>
<dbReference type="HOGENOM" id="CLU_016922_1_5_6"/>
<dbReference type="UniPathway" id="UPA00251">
    <property type="reaction ID" value="UER00317"/>
</dbReference>
<dbReference type="GO" id="GO:0005737">
    <property type="term" value="C:cytoplasm"/>
    <property type="evidence" value="ECO:0007669"/>
    <property type="project" value="UniProtKB-SubCell"/>
</dbReference>
<dbReference type="GO" id="GO:0042286">
    <property type="term" value="F:glutamate-1-semialdehyde 2,1-aminomutase activity"/>
    <property type="evidence" value="ECO:0007669"/>
    <property type="project" value="UniProtKB-UniRule"/>
</dbReference>
<dbReference type="GO" id="GO:0030170">
    <property type="term" value="F:pyridoxal phosphate binding"/>
    <property type="evidence" value="ECO:0007669"/>
    <property type="project" value="InterPro"/>
</dbReference>
<dbReference type="GO" id="GO:0008483">
    <property type="term" value="F:transaminase activity"/>
    <property type="evidence" value="ECO:0007669"/>
    <property type="project" value="InterPro"/>
</dbReference>
<dbReference type="GO" id="GO:0006782">
    <property type="term" value="P:protoporphyrinogen IX biosynthetic process"/>
    <property type="evidence" value="ECO:0007669"/>
    <property type="project" value="UniProtKB-UniRule"/>
</dbReference>
<dbReference type="CDD" id="cd00610">
    <property type="entry name" value="OAT_like"/>
    <property type="match status" value="1"/>
</dbReference>
<dbReference type="FunFam" id="3.40.640.10:FF:000021">
    <property type="entry name" value="Glutamate-1-semialdehyde 2,1-aminomutase"/>
    <property type="match status" value="1"/>
</dbReference>
<dbReference type="Gene3D" id="3.90.1150.10">
    <property type="entry name" value="Aspartate Aminotransferase, domain 1"/>
    <property type="match status" value="1"/>
</dbReference>
<dbReference type="Gene3D" id="3.40.640.10">
    <property type="entry name" value="Type I PLP-dependent aspartate aminotransferase-like (Major domain)"/>
    <property type="match status" value="1"/>
</dbReference>
<dbReference type="HAMAP" id="MF_00375">
    <property type="entry name" value="HemL_aminotrans_3"/>
    <property type="match status" value="1"/>
</dbReference>
<dbReference type="InterPro" id="IPR004639">
    <property type="entry name" value="4pyrrol_synth_GluAld_NH2Trfase"/>
</dbReference>
<dbReference type="InterPro" id="IPR005814">
    <property type="entry name" value="Aminotrans_3"/>
</dbReference>
<dbReference type="InterPro" id="IPR049704">
    <property type="entry name" value="Aminotrans_3_PPA_site"/>
</dbReference>
<dbReference type="InterPro" id="IPR015424">
    <property type="entry name" value="PyrdxlP-dep_Trfase"/>
</dbReference>
<dbReference type="InterPro" id="IPR015421">
    <property type="entry name" value="PyrdxlP-dep_Trfase_major"/>
</dbReference>
<dbReference type="InterPro" id="IPR015422">
    <property type="entry name" value="PyrdxlP-dep_Trfase_small"/>
</dbReference>
<dbReference type="NCBIfam" id="TIGR00713">
    <property type="entry name" value="hemL"/>
    <property type="match status" value="1"/>
</dbReference>
<dbReference type="NCBIfam" id="NF000818">
    <property type="entry name" value="PRK00062.1"/>
    <property type="match status" value="1"/>
</dbReference>
<dbReference type="PANTHER" id="PTHR43713">
    <property type="entry name" value="GLUTAMATE-1-SEMIALDEHYDE 2,1-AMINOMUTASE"/>
    <property type="match status" value="1"/>
</dbReference>
<dbReference type="PANTHER" id="PTHR43713:SF3">
    <property type="entry name" value="GLUTAMATE-1-SEMIALDEHYDE 2,1-AMINOMUTASE 1, CHLOROPLASTIC-RELATED"/>
    <property type="match status" value="1"/>
</dbReference>
<dbReference type="Pfam" id="PF00202">
    <property type="entry name" value="Aminotran_3"/>
    <property type="match status" value="1"/>
</dbReference>
<dbReference type="SUPFAM" id="SSF53383">
    <property type="entry name" value="PLP-dependent transferases"/>
    <property type="match status" value="1"/>
</dbReference>
<dbReference type="PROSITE" id="PS00600">
    <property type="entry name" value="AA_TRANSFER_CLASS_3"/>
    <property type="match status" value="1"/>
</dbReference>
<keyword id="KW-0963">Cytoplasm</keyword>
<keyword id="KW-0413">Isomerase</keyword>
<keyword id="KW-0627">Porphyrin biosynthesis</keyword>
<keyword id="KW-0663">Pyridoxal phosphate</keyword>
<name>GSA_XANOM</name>
<reference key="1">
    <citation type="journal article" date="2005" name="Jpn. Agric. Res. Q.">
        <title>Genome sequence of Xanthomonas oryzae pv. oryzae suggests contribution of large numbers of effector genes and insertion sequences to its race diversity.</title>
        <authorList>
            <person name="Ochiai H."/>
            <person name="Inoue Y."/>
            <person name="Takeya M."/>
            <person name="Sasaki A."/>
            <person name="Kaku H."/>
        </authorList>
    </citation>
    <scope>NUCLEOTIDE SEQUENCE [LARGE SCALE GENOMIC DNA]</scope>
    <source>
        <strain>MAFF 311018</strain>
    </source>
</reference>
<comment type="catalytic activity">
    <reaction evidence="1">
        <text>(S)-4-amino-5-oxopentanoate = 5-aminolevulinate</text>
        <dbReference type="Rhea" id="RHEA:14265"/>
        <dbReference type="ChEBI" id="CHEBI:57501"/>
        <dbReference type="ChEBI" id="CHEBI:356416"/>
        <dbReference type="EC" id="5.4.3.8"/>
    </reaction>
</comment>
<comment type="cofactor">
    <cofactor evidence="1">
        <name>pyridoxal 5'-phosphate</name>
        <dbReference type="ChEBI" id="CHEBI:597326"/>
    </cofactor>
</comment>
<comment type="pathway">
    <text evidence="1">Porphyrin-containing compound metabolism; protoporphyrin-IX biosynthesis; 5-aminolevulinate from L-glutamyl-tRNA(Glu): step 2/2.</text>
</comment>
<comment type="subunit">
    <text evidence="1">Homodimer.</text>
</comment>
<comment type="subcellular location">
    <subcellularLocation>
        <location evidence="1">Cytoplasm</location>
    </subcellularLocation>
</comment>
<comment type="similarity">
    <text evidence="1">Belongs to the class-III pyridoxal-phosphate-dependent aminotransferase family. HemL subfamily.</text>
</comment>
<protein>
    <recommendedName>
        <fullName evidence="1">Glutamate-1-semialdehyde 2,1-aminomutase</fullName>
        <shortName evidence="1">GSA</shortName>
        <ecNumber evidence="1">5.4.3.8</ecNumber>
    </recommendedName>
    <alternativeName>
        <fullName evidence="1">Glutamate-1-semialdehyde aminotransferase</fullName>
        <shortName evidence="1">GSA-AT</shortName>
    </alternativeName>
</protein>
<feature type="chain" id="PRO_0000243646" description="Glutamate-1-semialdehyde 2,1-aminomutase">
    <location>
        <begin position="1"/>
        <end position="429"/>
    </location>
</feature>
<feature type="modified residue" description="N6-(pyridoxal phosphate)lysine" evidence="1">
    <location>
        <position position="267"/>
    </location>
</feature>
<sequence>MNHSRSHALFAQAQTVLPGGVNSPVRAFKSVGGEPFFVARADGSYLFDVDGNRYIDYVGSWGPMIAGHNHPAVREAVERAIRDGLSFGAPCAAEVTMAETITGLVPSCEMVRMVNSGTEATLSAVRLARGATGRNRIIKFEGCYHGHGDSFLVKAGSGMLTLGVPTSPGVPAGLSELTATLSFNDFEGATALFDEIGPEVAAVIIEPVVGNANCIPPQAGYLQHLRTLCTRHGALLIFDEVMTGFRVALGGAQAHYGVTPDLSTFGKIIGGGMPVGAYGGRRDLMEQIAPAGPIYQAGTLSGNPVAMAAGLAMLELVQEPGFHMRLSEATSALCEGLKDAARTAGIAVTTNQVGGMFGLFFTDDIVESYAQATACDITSFNRFFHAMLQRGVYLAPSAYEAGFMSSAHDATVIEATLAAARDAFADVAR</sequence>
<organism>
    <name type="scientific">Xanthomonas oryzae pv. oryzae (strain MAFF 311018)</name>
    <dbReference type="NCBI Taxonomy" id="342109"/>
    <lineage>
        <taxon>Bacteria</taxon>
        <taxon>Pseudomonadati</taxon>
        <taxon>Pseudomonadota</taxon>
        <taxon>Gammaproteobacteria</taxon>
        <taxon>Lysobacterales</taxon>
        <taxon>Lysobacteraceae</taxon>
        <taxon>Xanthomonas</taxon>
    </lineage>
</organism>
<evidence type="ECO:0000255" key="1">
    <source>
        <dbReference type="HAMAP-Rule" id="MF_00375"/>
    </source>
</evidence>
<accession>Q2P6E4</accession>
<gene>
    <name evidence="1" type="primary">hemL</name>
    <name type="ordered locus">XOO1128</name>
</gene>